<evidence type="ECO:0000255" key="1"/>
<evidence type="ECO:0000255" key="2">
    <source>
        <dbReference type="HAMAP-Rule" id="MF_01260"/>
    </source>
</evidence>
<dbReference type="EC" id="3.1.1.85" evidence="2"/>
<dbReference type="EMBL" id="CP000857">
    <property type="protein sequence ID" value="ACN47662.1"/>
    <property type="molecule type" value="Genomic_DNA"/>
</dbReference>
<dbReference type="RefSeq" id="WP_000998145.1">
    <property type="nucleotide sequence ID" value="NC_012125.1"/>
</dbReference>
<dbReference type="SMR" id="C0Q0I5"/>
<dbReference type="ESTHER" id="salty-BIOH">
    <property type="family name" value="BioH"/>
</dbReference>
<dbReference type="KEGG" id="sei:SPC_3579"/>
<dbReference type="HOGENOM" id="CLU_020336_12_2_6"/>
<dbReference type="UniPathway" id="UPA00078"/>
<dbReference type="Proteomes" id="UP000001599">
    <property type="component" value="Chromosome"/>
</dbReference>
<dbReference type="GO" id="GO:0005737">
    <property type="term" value="C:cytoplasm"/>
    <property type="evidence" value="ECO:0007669"/>
    <property type="project" value="UniProtKB-SubCell"/>
</dbReference>
<dbReference type="GO" id="GO:0090499">
    <property type="term" value="F:pimelyl-[acyl-carrier protein] methyl ester esterase activity"/>
    <property type="evidence" value="ECO:0007669"/>
    <property type="project" value="UniProtKB-EC"/>
</dbReference>
<dbReference type="GO" id="GO:0009102">
    <property type="term" value="P:biotin biosynthetic process"/>
    <property type="evidence" value="ECO:0007669"/>
    <property type="project" value="UniProtKB-UniRule"/>
</dbReference>
<dbReference type="FunFam" id="3.40.50.1820:FF:000045">
    <property type="entry name" value="Pimeloyl-[acyl-carrier protein] methyl ester esterase"/>
    <property type="match status" value="1"/>
</dbReference>
<dbReference type="Gene3D" id="3.40.50.1820">
    <property type="entry name" value="alpha/beta hydrolase"/>
    <property type="match status" value="1"/>
</dbReference>
<dbReference type="HAMAP" id="MF_01260">
    <property type="entry name" value="Carboxylester"/>
    <property type="match status" value="1"/>
</dbReference>
<dbReference type="InterPro" id="IPR000073">
    <property type="entry name" value="AB_hydrolase_1"/>
</dbReference>
<dbReference type="InterPro" id="IPR029058">
    <property type="entry name" value="AB_hydrolase_fold"/>
</dbReference>
<dbReference type="InterPro" id="IPR010076">
    <property type="entry name" value="BioH"/>
</dbReference>
<dbReference type="InterPro" id="IPR050228">
    <property type="entry name" value="Carboxylesterase_BioH"/>
</dbReference>
<dbReference type="NCBIfam" id="TIGR01738">
    <property type="entry name" value="bioH"/>
    <property type="match status" value="1"/>
</dbReference>
<dbReference type="NCBIfam" id="NF007674">
    <property type="entry name" value="PRK10349.1"/>
    <property type="match status" value="1"/>
</dbReference>
<dbReference type="PANTHER" id="PTHR43194">
    <property type="entry name" value="HYDROLASE ALPHA/BETA FOLD FAMILY"/>
    <property type="match status" value="1"/>
</dbReference>
<dbReference type="PANTHER" id="PTHR43194:SF5">
    <property type="entry name" value="PIMELOYL-[ACYL-CARRIER PROTEIN] METHYL ESTER ESTERASE"/>
    <property type="match status" value="1"/>
</dbReference>
<dbReference type="Pfam" id="PF00561">
    <property type="entry name" value="Abhydrolase_1"/>
    <property type="match status" value="1"/>
</dbReference>
<dbReference type="SUPFAM" id="SSF53474">
    <property type="entry name" value="alpha/beta-Hydrolases"/>
    <property type="match status" value="1"/>
</dbReference>
<feature type="chain" id="PRO_1000165116" description="Pimeloyl-[acyl-carrier protein] methyl ester esterase">
    <location>
        <begin position="1"/>
        <end position="256"/>
    </location>
</feature>
<feature type="domain" description="AB hydrolase-1" evidence="1">
    <location>
        <begin position="15"/>
        <end position="242"/>
    </location>
</feature>
<feature type="active site" description="Nucleophile" evidence="2">
    <location>
        <position position="82"/>
    </location>
</feature>
<feature type="active site" evidence="2">
    <location>
        <position position="207"/>
    </location>
</feature>
<feature type="active site" evidence="2">
    <location>
        <position position="235"/>
    </location>
</feature>
<feature type="binding site" evidence="2">
    <location>
        <position position="22"/>
    </location>
    <ligand>
        <name>substrate</name>
    </ligand>
</feature>
<feature type="binding site" evidence="2">
    <location>
        <begin position="82"/>
        <end position="83"/>
    </location>
    <ligand>
        <name>substrate</name>
    </ligand>
</feature>
<feature type="binding site" evidence="2">
    <location>
        <begin position="143"/>
        <end position="147"/>
    </location>
    <ligand>
        <name>substrate</name>
    </ligand>
</feature>
<feature type="binding site" evidence="2">
    <location>
        <position position="235"/>
    </location>
    <ligand>
        <name>substrate</name>
    </ligand>
</feature>
<keyword id="KW-0093">Biotin biosynthesis</keyword>
<keyword id="KW-0963">Cytoplasm</keyword>
<keyword id="KW-0378">Hydrolase</keyword>
<keyword id="KW-0719">Serine esterase</keyword>
<protein>
    <recommendedName>
        <fullName evidence="2">Pimeloyl-[acyl-carrier protein] methyl ester esterase</fullName>
        <ecNumber evidence="2">3.1.1.85</ecNumber>
    </recommendedName>
    <alternativeName>
        <fullName evidence="2">Biotin synthesis protein BioH</fullName>
    </alternativeName>
    <alternativeName>
        <fullName evidence="2">Carboxylesterase BioH</fullName>
    </alternativeName>
</protein>
<sequence>MNDIWWQTYGEGNCHLVLLHGWGLNAEVWHCIREELGSHFTLHLVDLPGYGRSSGFGAMTLEEMTAQVAKNAPDQAIWLGWSLGGLVASQMALTHPERVQALVTVASSPCFSAREGWPGIKPEILGGFQQQLSDDFQRTVERFLALQTLGTETARQDARTLKSVVLAQPMPDVEVLNGGLEILKTVDLREALKNVNMPFLRLYGYLDGLVPRKIAPLLDTLWPHSTSQIMAKAAHAPFISHPAAFCQALMTLKSSL</sequence>
<accession>C0Q0I5</accession>
<gene>
    <name evidence="2" type="primary">bioH</name>
    <name type="ordered locus">SPC_3579</name>
</gene>
<reference key="1">
    <citation type="journal article" date="2009" name="PLoS ONE">
        <title>Salmonella paratyphi C: genetic divergence from Salmonella choleraesuis and pathogenic convergence with Salmonella typhi.</title>
        <authorList>
            <person name="Liu W.-Q."/>
            <person name="Feng Y."/>
            <person name="Wang Y."/>
            <person name="Zou Q.-H."/>
            <person name="Chen F."/>
            <person name="Guo J.-T."/>
            <person name="Peng Y.-H."/>
            <person name="Jin Y."/>
            <person name="Li Y.-G."/>
            <person name="Hu S.-N."/>
            <person name="Johnston R.N."/>
            <person name="Liu G.-R."/>
            <person name="Liu S.-L."/>
        </authorList>
    </citation>
    <scope>NUCLEOTIDE SEQUENCE [LARGE SCALE GENOMIC DNA]</scope>
    <source>
        <strain>RKS4594</strain>
    </source>
</reference>
<organism>
    <name type="scientific">Salmonella paratyphi C (strain RKS4594)</name>
    <dbReference type="NCBI Taxonomy" id="476213"/>
    <lineage>
        <taxon>Bacteria</taxon>
        <taxon>Pseudomonadati</taxon>
        <taxon>Pseudomonadota</taxon>
        <taxon>Gammaproteobacteria</taxon>
        <taxon>Enterobacterales</taxon>
        <taxon>Enterobacteriaceae</taxon>
        <taxon>Salmonella</taxon>
    </lineage>
</organism>
<name>BIOH_SALPC</name>
<proteinExistence type="inferred from homology"/>
<comment type="function">
    <text evidence="2">The physiological role of BioH is to remove the methyl group introduced by BioC when the pimeloyl moiety is complete. It allows to synthesize pimeloyl-ACP via the fatty acid synthetic pathway through the hydrolysis of the ester bonds of pimeloyl-ACP esters.</text>
</comment>
<comment type="catalytic activity">
    <reaction evidence="2">
        <text>6-carboxyhexanoyl-[ACP] methyl ester + H2O = 6-carboxyhexanoyl-[ACP] + methanol + H(+)</text>
        <dbReference type="Rhea" id="RHEA:42700"/>
        <dbReference type="Rhea" id="RHEA-COMP:9955"/>
        <dbReference type="Rhea" id="RHEA-COMP:10186"/>
        <dbReference type="ChEBI" id="CHEBI:15377"/>
        <dbReference type="ChEBI" id="CHEBI:15378"/>
        <dbReference type="ChEBI" id="CHEBI:17790"/>
        <dbReference type="ChEBI" id="CHEBI:78846"/>
        <dbReference type="ChEBI" id="CHEBI:82735"/>
        <dbReference type="EC" id="3.1.1.85"/>
    </reaction>
</comment>
<comment type="pathway">
    <text evidence="2">Cofactor biosynthesis; biotin biosynthesis.</text>
</comment>
<comment type="subunit">
    <text evidence="2">Monomer.</text>
</comment>
<comment type="subcellular location">
    <subcellularLocation>
        <location evidence="2">Cytoplasm</location>
    </subcellularLocation>
</comment>
<comment type="similarity">
    <text evidence="2">Belongs to the AB hydrolase superfamily. Carboxylesterase BioH family.</text>
</comment>